<reference key="1">
    <citation type="journal article" date="2000" name="Nature">
        <title>Complete DNA sequence of a serogroup A strain of Neisseria meningitidis Z2491.</title>
        <authorList>
            <person name="Parkhill J."/>
            <person name="Achtman M."/>
            <person name="James K.D."/>
            <person name="Bentley S.D."/>
            <person name="Churcher C.M."/>
            <person name="Klee S.R."/>
            <person name="Morelli G."/>
            <person name="Basham D."/>
            <person name="Brown D."/>
            <person name="Chillingworth T."/>
            <person name="Davies R.M."/>
            <person name="Davis P."/>
            <person name="Devlin K."/>
            <person name="Feltwell T."/>
            <person name="Hamlin N."/>
            <person name="Holroyd S."/>
            <person name="Jagels K."/>
            <person name="Leather S."/>
            <person name="Moule S."/>
            <person name="Mungall K.L."/>
            <person name="Quail M.A."/>
            <person name="Rajandream M.A."/>
            <person name="Rutherford K.M."/>
            <person name="Simmonds M."/>
            <person name="Skelton J."/>
            <person name="Whitehead S."/>
            <person name="Spratt B.G."/>
            <person name="Barrell B.G."/>
        </authorList>
    </citation>
    <scope>NUCLEOTIDE SEQUENCE [LARGE SCALE GENOMIC DNA]</scope>
    <source>
        <strain>DSM 15465 / Z2491</strain>
    </source>
</reference>
<dbReference type="EC" id="2.1.1.14" evidence="1"/>
<dbReference type="EMBL" id="AL157959">
    <property type="protein sequence ID" value="CAM08346.1"/>
    <property type="molecule type" value="Genomic_DNA"/>
</dbReference>
<dbReference type="PIR" id="G81880">
    <property type="entry name" value="G81880"/>
</dbReference>
<dbReference type="RefSeq" id="WP_010981168.1">
    <property type="nucleotide sequence ID" value="NC_003116.1"/>
</dbReference>
<dbReference type="SMR" id="Q9JUT6"/>
<dbReference type="EnsemblBacteria" id="CAM08346">
    <property type="protein sequence ID" value="CAM08346"/>
    <property type="gene ID" value="NMA1140"/>
</dbReference>
<dbReference type="KEGG" id="nma:NMA1140"/>
<dbReference type="HOGENOM" id="CLU_013175_0_0_4"/>
<dbReference type="UniPathway" id="UPA00051">
    <property type="reaction ID" value="UER00082"/>
</dbReference>
<dbReference type="Proteomes" id="UP000000626">
    <property type="component" value="Chromosome"/>
</dbReference>
<dbReference type="GO" id="GO:0003871">
    <property type="term" value="F:5-methyltetrahydropteroyltriglutamate-homocysteine S-methyltransferase activity"/>
    <property type="evidence" value="ECO:0007669"/>
    <property type="project" value="UniProtKB-UniRule"/>
</dbReference>
<dbReference type="GO" id="GO:0008270">
    <property type="term" value="F:zinc ion binding"/>
    <property type="evidence" value="ECO:0007669"/>
    <property type="project" value="InterPro"/>
</dbReference>
<dbReference type="GO" id="GO:0009086">
    <property type="term" value="P:methionine biosynthetic process"/>
    <property type="evidence" value="ECO:0007669"/>
    <property type="project" value="UniProtKB-UniRule"/>
</dbReference>
<dbReference type="GO" id="GO:0032259">
    <property type="term" value="P:methylation"/>
    <property type="evidence" value="ECO:0007669"/>
    <property type="project" value="UniProtKB-KW"/>
</dbReference>
<dbReference type="CDD" id="cd03311">
    <property type="entry name" value="CIMS_C_terminal_like"/>
    <property type="match status" value="1"/>
</dbReference>
<dbReference type="CDD" id="cd03312">
    <property type="entry name" value="CIMS_N_terminal_like"/>
    <property type="match status" value="1"/>
</dbReference>
<dbReference type="FunFam" id="3.20.20.210:FF:000002">
    <property type="entry name" value="5-methyltetrahydropteroyltriglutamate--homocysteine methyltransferase"/>
    <property type="match status" value="1"/>
</dbReference>
<dbReference type="Gene3D" id="3.20.20.210">
    <property type="match status" value="2"/>
</dbReference>
<dbReference type="HAMAP" id="MF_00172">
    <property type="entry name" value="Meth_synth"/>
    <property type="match status" value="1"/>
</dbReference>
<dbReference type="InterPro" id="IPR013215">
    <property type="entry name" value="Cbl-indep_Met_Synth_N"/>
</dbReference>
<dbReference type="InterPro" id="IPR006276">
    <property type="entry name" value="Cobalamin-indep_Met_synthase"/>
</dbReference>
<dbReference type="InterPro" id="IPR002629">
    <property type="entry name" value="Met_Synth_C/arc"/>
</dbReference>
<dbReference type="InterPro" id="IPR038071">
    <property type="entry name" value="UROD/MetE-like_sf"/>
</dbReference>
<dbReference type="NCBIfam" id="TIGR01371">
    <property type="entry name" value="met_syn_B12ind"/>
    <property type="match status" value="1"/>
</dbReference>
<dbReference type="NCBIfam" id="NF003556">
    <property type="entry name" value="PRK05222.1"/>
    <property type="match status" value="1"/>
</dbReference>
<dbReference type="PANTHER" id="PTHR30519">
    <property type="entry name" value="5-METHYLTETRAHYDROPTEROYLTRIGLUTAMATE--HOMOCYSTEINE METHYLTRANSFERASE"/>
    <property type="match status" value="1"/>
</dbReference>
<dbReference type="Pfam" id="PF08267">
    <property type="entry name" value="Meth_synt_1"/>
    <property type="match status" value="1"/>
</dbReference>
<dbReference type="Pfam" id="PF01717">
    <property type="entry name" value="Meth_synt_2"/>
    <property type="match status" value="1"/>
</dbReference>
<dbReference type="PIRSF" id="PIRSF000382">
    <property type="entry name" value="MeTrfase_B12_ind"/>
    <property type="match status" value="1"/>
</dbReference>
<dbReference type="SUPFAM" id="SSF51726">
    <property type="entry name" value="UROD/MetE-like"/>
    <property type="match status" value="2"/>
</dbReference>
<evidence type="ECO:0000255" key="1">
    <source>
        <dbReference type="HAMAP-Rule" id="MF_00172"/>
    </source>
</evidence>
<evidence type="ECO:0000305" key="2"/>
<feature type="chain" id="PRO_0000098643" description="5-methyltetrahydropteroyltriglutamate--homocysteine methyltransferase">
    <location>
        <begin position="1"/>
        <end position="758"/>
    </location>
</feature>
<feature type="active site" description="Proton donor" evidence="1">
    <location>
        <position position="696"/>
    </location>
</feature>
<feature type="binding site" evidence="1">
    <location>
        <begin position="16"/>
        <end position="19"/>
    </location>
    <ligand>
        <name>5-methyltetrahydropteroyltri-L-glutamate</name>
        <dbReference type="ChEBI" id="CHEBI:58207"/>
    </ligand>
</feature>
<feature type="binding site" evidence="1">
    <location>
        <position position="112"/>
    </location>
    <ligand>
        <name>5-methyltetrahydropteroyltri-L-glutamate</name>
        <dbReference type="ChEBI" id="CHEBI:58207"/>
    </ligand>
</feature>
<feature type="binding site" evidence="1">
    <location>
        <begin position="433"/>
        <end position="435"/>
    </location>
    <ligand>
        <name>L-homocysteine</name>
        <dbReference type="ChEBI" id="CHEBI:58199"/>
    </ligand>
</feature>
<feature type="binding site" evidence="1">
    <location>
        <begin position="433"/>
        <end position="435"/>
    </location>
    <ligand>
        <name>L-methionine</name>
        <dbReference type="ChEBI" id="CHEBI:57844"/>
    </ligand>
</feature>
<feature type="binding site" evidence="1">
    <location>
        <position position="486"/>
    </location>
    <ligand>
        <name>L-homocysteine</name>
        <dbReference type="ChEBI" id="CHEBI:58199"/>
    </ligand>
</feature>
<feature type="binding site" evidence="1">
    <location>
        <position position="486"/>
    </location>
    <ligand>
        <name>L-methionine</name>
        <dbReference type="ChEBI" id="CHEBI:57844"/>
    </ligand>
</feature>
<feature type="binding site" evidence="1">
    <location>
        <begin position="517"/>
        <end position="518"/>
    </location>
    <ligand>
        <name>5-methyltetrahydropteroyltri-L-glutamate</name>
        <dbReference type="ChEBI" id="CHEBI:58207"/>
    </ligand>
</feature>
<feature type="binding site" evidence="1">
    <location>
        <position position="563"/>
    </location>
    <ligand>
        <name>5-methyltetrahydropteroyltri-L-glutamate</name>
        <dbReference type="ChEBI" id="CHEBI:58207"/>
    </ligand>
</feature>
<feature type="binding site" evidence="1">
    <location>
        <position position="601"/>
    </location>
    <ligand>
        <name>L-homocysteine</name>
        <dbReference type="ChEBI" id="CHEBI:58199"/>
    </ligand>
</feature>
<feature type="binding site" evidence="1">
    <location>
        <position position="601"/>
    </location>
    <ligand>
        <name>L-methionine</name>
        <dbReference type="ChEBI" id="CHEBI:57844"/>
    </ligand>
</feature>
<feature type="binding site" evidence="1">
    <location>
        <position position="607"/>
    </location>
    <ligand>
        <name>5-methyltetrahydropteroyltri-L-glutamate</name>
        <dbReference type="ChEBI" id="CHEBI:58207"/>
    </ligand>
</feature>
<feature type="binding site" evidence="1">
    <location>
        <position position="643"/>
    </location>
    <ligand>
        <name>Zn(2+)</name>
        <dbReference type="ChEBI" id="CHEBI:29105"/>
        <note>catalytic</note>
    </ligand>
</feature>
<feature type="binding site" evidence="1">
    <location>
        <position position="645"/>
    </location>
    <ligand>
        <name>Zn(2+)</name>
        <dbReference type="ChEBI" id="CHEBI:29105"/>
        <note>catalytic</note>
    </ligand>
</feature>
<feature type="binding site" evidence="1">
    <location>
        <position position="667"/>
    </location>
    <ligand>
        <name>Zn(2+)</name>
        <dbReference type="ChEBI" id="CHEBI:29105"/>
        <note>catalytic</note>
    </ligand>
</feature>
<feature type="binding site" evidence="1">
    <location>
        <position position="728"/>
    </location>
    <ligand>
        <name>Zn(2+)</name>
        <dbReference type="ChEBI" id="CHEBI:29105"/>
        <note>catalytic</note>
    </ligand>
</feature>
<organism>
    <name type="scientific">Neisseria meningitidis serogroup A / serotype 4A (strain DSM 15465 / Z2491)</name>
    <dbReference type="NCBI Taxonomy" id="122587"/>
    <lineage>
        <taxon>Bacteria</taxon>
        <taxon>Pseudomonadati</taxon>
        <taxon>Pseudomonadota</taxon>
        <taxon>Betaproteobacteria</taxon>
        <taxon>Neisseriales</taxon>
        <taxon>Neisseriaceae</taxon>
        <taxon>Neisseria</taxon>
    </lineage>
</organism>
<name>METE_NEIMA</name>
<proteinExistence type="inferred from homology"/>
<accession>Q9JUT6</accession>
<accession>A1IRG0</accession>
<sequence>MTTLHFSGFPRVGAFRELKFAQEKYWRKEISEQELLAVAKDLREKNWKHQAAANADYVAVGDFTFYDHILDLQVATGAIPARFGFDSQNLSLEQFFQLARGNKDQFAIEMTKWFDTNYHYLVPEFHADTEFKANAKHYVQQLQEAQALGLKAKPTVVGPLTFLWVGKEKGAVEFDRLSLLPKLLPVYVEILTALVEAGAEWIQIDEPALTVDLPKEWVEAYKDVYATLSKVSAKILLSTYFGSVAEHAALLKSLPVDGLHIDLVRAPEQLDAFADYDKVLSAGVIDGRNIWRANLNKVLETVELLQAKLGDRLWISSSCSLLHTPFDLSVEEKLKANKPDLYSWLAFTLQKTQELRVLKAALNEGRDSVAEELAASQAAADSRANSSEIHRADVAKRLADLPANADQRKSPFADRIKAQQAWLNLPLLPTTNIGSFPQTTEIRQARAAFKKGELSAADYEAAMKKEIALVVEEQEKLDLDVLVHGEAERNDMVEYFGELLSGFAFTQYGWVQSYGSRCVKPPIIFGDVSRPEAMTVAWSTYAQSLTKRPMKGMLTGPVTILQWSFVRNDIPRSTVCKQIALALNDEVLDLEKAGIKVIQIDEPAIREGLPLKRADWDAYLNWAGESFRLSSTGCEDSTQIHTHMCYSEFNDILPAIAAMDADVITIETSRSDMELLTAFGEFKYPNDIGPGVYDIHSPRVPTEAEVEHLLRKAIEVVPVERLWVNPDCGLKTRGWKETLEQLQVMMNVTHKLRAELAK</sequence>
<protein>
    <recommendedName>
        <fullName evidence="1">5-methyltetrahydropteroyltriglutamate--homocysteine methyltransferase</fullName>
        <ecNumber evidence="1">2.1.1.14</ecNumber>
    </recommendedName>
    <alternativeName>
        <fullName evidence="1">Cobalamin-independent methionine synthase</fullName>
    </alternativeName>
    <alternativeName>
        <fullName evidence="1">Methionine synthase, vitamin-B12 independent isozyme</fullName>
    </alternativeName>
</protein>
<comment type="function">
    <text evidence="1">Catalyzes the transfer of a methyl group from 5-methyltetrahydrofolate to homocysteine resulting in methionine formation.</text>
</comment>
<comment type="catalytic activity">
    <reaction evidence="1">
        <text>5-methyltetrahydropteroyltri-L-glutamate + L-homocysteine = tetrahydropteroyltri-L-glutamate + L-methionine</text>
        <dbReference type="Rhea" id="RHEA:21196"/>
        <dbReference type="ChEBI" id="CHEBI:57844"/>
        <dbReference type="ChEBI" id="CHEBI:58140"/>
        <dbReference type="ChEBI" id="CHEBI:58199"/>
        <dbReference type="ChEBI" id="CHEBI:58207"/>
        <dbReference type="EC" id="2.1.1.14"/>
    </reaction>
</comment>
<comment type="cofactor">
    <cofactor evidence="1">
        <name>Zn(2+)</name>
        <dbReference type="ChEBI" id="CHEBI:29105"/>
    </cofactor>
    <text evidence="1">Binds 1 zinc ion per subunit.</text>
</comment>
<comment type="pathway">
    <text evidence="1">Amino-acid biosynthesis; L-methionine biosynthesis via de novo pathway; L-methionine from L-homocysteine (MetE route): step 1/1.</text>
</comment>
<comment type="similarity">
    <text evidence="1 2">Belongs to the vitamin-B12 independent methionine synthase family.</text>
</comment>
<keyword id="KW-0028">Amino-acid biosynthesis</keyword>
<keyword id="KW-0479">Metal-binding</keyword>
<keyword id="KW-0486">Methionine biosynthesis</keyword>
<keyword id="KW-0489">Methyltransferase</keyword>
<keyword id="KW-0677">Repeat</keyword>
<keyword id="KW-0808">Transferase</keyword>
<keyword id="KW-0862">Zinc</keyword>
<gene>
    <name evidence="1" type="primary">metE</name>
    <name type="ordered locus">NMA1140</name>
</gene>